<protein>
    <recommendedName>
        <fullName>Cytochrome P450 1A2</fullName>
        <ecNumber evidence="2">1.14.14.1</ecNumber>
    </recommendedName>
    <alternativeName>
        <fullName>CYPIA2</fullName>
    </alternativeName>
    <alternativeName>
        <fullName evidence="2">Cholesterol 25-hydroxylase</fullName>
    </alternativeName>
    <alternativeName>
        <fullName>Cytochrome P450-MC4</fullName>
    </alternativeName>
    <alternativeName>
        <fullName>Hepatic cytochrome P-450MC1</fullName>
    </alternativeName>
    <alternativeName>
        <fullName>Hydroperoxy icosatetraenoate dehydratase</fullName>
        <ecNumber evidence="2">4.2.1.152</ecNumber>
    </alternativeName>
</protein>
<sequence>MALSQYTSLSTELVLATAIFCIVFWVARALRTQVPKGLKTPPGPWGLPILGHVLTLGKNPHLSLTKLSKQYGDVLQIRIGSTPVVVLSGLDTIRQALVRQGDDFKGRPDLYSFTLITNGKSMTFNPDCGPVWAARRRLAQDALKSFSIASDPTSASSCYLEDHVIKEANHLVSKLQKLTAEVGHFEPVNQVVESVANVIGAMCFGKNFPRKSEEMLRIVKGSSDFVENVSSGNAVDFFPILRYLPNPDLKRFKNFNDNFVLFLQKTVQEHYQDFNKNSIQDITGALFKHSENSKDSGGLIPQEKIVNIVNDLFGAGFDTVTTAITLSILLLVTWPNVQRKIHKELDTVIGRDRQPRLSDRLQLPYMEAFILELYRYTSFVPFTIPHSTTRDTSLNGFYIPKDRCIFINQWQVNHDEKQWKDPFVFRPERFLTDNDTVINKTLSEKVMLFGLGKRRCIGEIPAKWEVFLFLAILLQQLEFSVPPGTKVDLTPTYGLTMKPQTCKYIQAWPRFSK</sequence>
<dbReference type="EC" id="1.14.14.1" evidence="2"/>
<dbReference type="EC" id="4.2.1.152" evidence="2"/>
<dbReference type="EMBL" id="M63787">
    <property type="protein sequence ID" value="AAA37070.1"/>
    <property type="molecule type" value="mRNA"/>
</dbReference>
<dbReference type="EMBL" id="D10252">
    <property type="protein sequence ID" value="BAA01097.1"/>
    <property type="molecule type" value="mRNA"/>
</dbReference>
<dbReference type="EMBL" id="D10914">
    <property type="protein sequence ID" value="BAA01718.1"/>
    <property type="molecule type" value="Genomic_DNA"/>
</dbReference>
<dbReference type="PIR" id="JX0190">
    <property type="entry name" value="JX0190"/>
</dbReference>
<dbReference type="RefSeq" id="NP_001268302.1">
    <property type="nucleotide sequence ID" value="NM_001281373.1"/>
</dbReference>
<dbReference type="SMR" id="P24453"/>
<dbReference type="STRING" id="10036.ENSMAUP00000007198"/>
<dbReference type="GlyCosmos" id="P24453">
    <property type="glycosylation" value="1 site, No reported glycans"/>
</dbReference>
<dbReference type="GeneID" id="101825565"/>
<dbReference type="KEGG" id="maua:101825565"/>
<dbReference type="eggNOG" id="KOG0156">
    <property type="taxonomic scope" value="Eukaryota"/>
</dbReference>
<dbReference type="OrthoDB" id="1055148at2759"/>
<dbReference type="UniPathway" id="UPA00296"/>
<dbReference type="UniPathway" id="UPA00383"/>
<dbReference type="UniPathway" id="UPA00912"/>
<dbReference type="Proteomes" id="UP000189706">
    <property type="component" value="Unplaced"/>
</dbReference>
<dbReference type="GO" id="GO:0005789">
    <property type="term" value="C:endoplasmic reticulum membrane"/>
    <property type="evidence" value="ECO:0007669"/>
    <property type="project" value="UniProtKB-SubCell"/>
</dbReference>
<dbReference type="GO" id="GO:0101020">
    <property type="term" value="F:estrogen 16-alpha-hydroxylase activity"/>
    <property type="evidence" value="ECO:0000250"/>
    <property type="project" value="UniProtKB"/>
</dbReference>
<dbReference type="GO" id="GO:0101021">
    <property type="term" value="F:estrogen 2-hydroxylase activity"/>
    <property type="evidence" value="ECO:0000250"/>
    <property type="project" value="UniProtKB"/>
</dbReference>
<dbReference type="GO" id="GO:0020037">
    <property type="term" value="F:heme binding"/>
    <property type="evidence" value="ECO:0000250"/>
    <property type="project" value="UniProtKB"/>
</dbReference>
<dbReference type="GO" id="GO:0106256">
    <property type="term" value="F:hydroperoxy icosatetraenoate dehydratase activity"/>
    <property type="evidence" value="ECO:0007669"/>
    <property type="project" value="UniProtKB-EC"/>
</dbReference>
<dbReference type="GO" id="GO:0005506">
    <property type="term" value="F:iron ion binding"/>
    <property type="evidence" value="ECO:0007669"/>
    <property type="project" value="InterPro"/>
</dbReference>
<dbReference type="GO" id="GO:0004508">
    <property type="term" value="F:steroid 17-alpha-monooxygenase activity"/>
    <property type="evidence" value="ECO:0007669"/>
    <property type="project" value="TreeGrafter"/>
</dbReference>
<dbReference type="GO" id="GO:0019369">
    <property type="term" value="P:arachidonate metabolic process"/>
    <property type="evidence" value="ECO:0007669"/>
    <property type="project" value="UniProtKB-UniPathway"/>
</dbReference>
<dbReference type="GO" id="GO:0008203">
    <property type="term" value="P:cholesterol metabolic process"/>
    <property type="evidence" value="ECO:0007669"/>
    <property type="project" value="UniProtKB-UniPathway"/>
</dbReference>
<dbReference type="GO" id="GO:0008210">
    <property type="term" value="P:estrogen metabolic process"/>
    <property type="evidence" value="ECO:0000250"/>
    <property type="project" value="UniProtKB"/>
</dbReference>
<dbReference type="GO" id="GO:0042446">
    <property type="term" value="P:hormone biosynthetic process"/>
    <property type="evidence" value="ECO:0007669"/>
    <property type="project" value="TreeGrafter"/>
</dbReference>
<dbReference type="GO" id="GO:0042448">
    <property type="term" value="P:progesterone metabolic process"/>
    <property type="evidence" value="ECO:0007669"/>
    <property type="project" value="TreeGrafter"/>
</dbReference>
<dbReference type="GO" id="GO:0042572">
    <property type="term" value="P:retinol metabolic process"/>
    <property type="evidence" value="ECO:0000250"/>
    <property type="project" value="UniProtKB"/>
</dbReference>
<dbReference type="CDD" id="cd20676">
    <property type="entry name" value="CYP1A"/>
    <property type="match status" value="1"/>
</dbReference>
<dbReference type="FunFam" id="1.10.630.10:FF:000002">
    <property type="entry name" value="Cytochrome P450 1A1"/>
    <property type="match status" value="1"/>
</dbReference>
<dbReference type="Gene3D" id="1.10.630.10">
    <property type="entry name" value="Cytochrome P450"/>
    <property type="match status" value="1"/>
</dbReference>
<dbReference type="InterPro" id="IPR001128">
    <property type="entry name" value="Cyt_P450"/>
</dbReference>
<dbReference type="InterPro" id="IPR017972">
    <property type="entry name" value="Cyt_P450_CS"/>
</dbReference>
<dbReference type="InterPro" id="IPR002401">
    <property type="entry name" value="Cyt_P450_E_grp-I"/>
</dbReference>
<dbReference type="InterPro" id="IPR008066">
    <property type="entry name" value="Cyt_P450_E_grp-I_CYP1"/>
</dbReference>
<dbReference type="InterPro" id="IPR036396">
    <property type="entry name" value="Cyt_P450_sf"/>
</dbReference>
<dbReference type="PANTHER" id="PTHR24289:SF21">
    <property type="entry name" value="CYTOCHROME P450 1A"/>
    <property type="match status" value="1"/>
</dbReference>
<dbReference type="PANTHER" id="PTHR24289">
    <property type="entry name" value="STEROID 17-ALPHA-HYDROXYLASE/17,20 LYASE"/>
    <property type="match status" value="1"/>
</dbReference>
<dbReference type="Pfam" id="PF00067">
    <property type="entry name" value="p450"/>
    <property type="match status" value="1"/>
</dbReference>
<dbReference type="PRINTS" id="PR00463">
    <property type="entry name" value="EP450I"/>
</dbReference>
<dbReference type="PRINTS" id="PR01683">
    <property type="entry name" value="EP450ICYP1A"/>
</dbReference>
<dbReference type="PRINTS" id="PR00385">
    <property type="entry name" value="P450"/>
</dbReference>
<dbReference type="SUPFAM" id="SSF48264">
    <property type="entry name" value="Cytochrome P450"/>
    <property type="match status" value="1"/>
</dbReference>
<dbReference type="PROSITE" id="PS00086">
    <property type="entry name" value="CYTOCHROME_P450"/>
    <property type="match status" value="1"/>
</dbReference>
<gene>
    <name type="primary">CYP1A2</name>
</gene>
<feature type="initiator methionine" description="Removed" evidence="3">
    <location>
        <position position="1"/>
    </location>
</feature>
<feature type="chain" id="PRO_0000051653" description="Cytochrome P450 1A2">
    <location>
        <begin position="2"/>
        <end position="513"/>
    </location>
</feature>
<feature type="binding site" evidence="1">
    <location>
        <position position="225"/>
    </location>
    <ligand>
        <name>substrate</name>
    </ligand>
</feature>
<feature type="binding site" description="axial binding residue" evidence="1">
    <location>
        <position position="456"/>
    </location>
    <ligand>
        <name>heme</name>
        <dbReference type="ChEBI" id="CHEBI:30413"/>
    </ligand>
    <ligandPart>
        <name>Fe</name>
        <dbReference type="ChEBI" id="CHEBI:18248"/>
    </ligandPart>
</feature>
<feature type="glycosylation site" description="O-linked (GlcNAc) serine" evidence="1">
    <location>
        <position position="68"/>
    </location>
</feature>
<feature type="sequence conflict" description="In Ref. 1; AAA37070." evidence="4" ref="1">
    <original>I</original>
    <variation>F</variation>
    <location>
        <position position="49"/>
    </location>
</feature>
<feature type="sequence conflict" description="In Ref. 1; AAA37070." evidence="4" ref="1">
    <original>HV</original>
    <variation>MC</variation>
    <location>
        <begin position="52"/>
        <end position="53"/>
    </location>
</feature>
<feature type="sequence conflict" description="In Ref. 1; AAA37070." evidence="4" ref="1">
    <original>KN</original>
    <variation>GG</variation>
    <location>
        <begin position="253"/>
        <end position="254"/>
    </location>
</feature>
<feature type="sequence conflict" description="In Ref. 1; AAA37070." evidence="4" ref="1">
    <original>L</original>
    <variation>W</variation>
    <location>
        <position position="326"/>
    </location>
</feature>
<feature type="sequence conflict" description="In Ref. 1; AAA37070." evidence="4" ref="1">
    <original>R</original>
    <variation>L</variation>
    <location>
        <position position="356"/>
    </location>
</feature>
<feature type="sequence conflict" description="In Ref. 1; AAA37070." evidence="4" ref="1">
    <original>T</original>
    <variation>Q</variation>
    <location>
        <position position="485"/>
    </location>
</feature>
<name>CP1A2_MESAU</name>
<proteinExistence type="evidence at protein level"/>
<keyword id="KW-0903">Direct protein sequencing</keyword>
<keyword id="KW-0256">Endoplasmic reticulum</keyword>
<keyword id="KW-0276">Fatty acid metabolism</keyword>
<keyword id="KW-0325">Glycoprotein</keyword>
<keyword id="KW-0349">Heme</keyword>
<keyword id="KW-0408">Iron</keyword>
<keyword id="KW-0443">Lipid metabolism</keyword>
<keyword id="KW-0456">Lyase</keyword>
<keyword id="KW-0472">Membrane</keyword>
<keyword id="KW-0479">Metal-binding</keyword>
<keyword id="KW-0492">Microsome</keyword>
<keyword id="KW-0503">Monooxygenase</keyword>
<keyword id="KW-0560">Oxidoreductase</keyword>
<keyword id="KW-1185">Reference proteome</keyword>
<keyword id="KW-0753">Steroid metabolism</keyword>
<keyword id="KW-1207">Sterol metabolism</keyword>
<comment type="function">
    <text evidence="2">A cytochrome P450 monooxygenase involved in the metabolism of various endogenous substrates, including fatty acids, steroid hormones and vitamins. Mechanistically, uses molecular oxygen inserting one oxygen atom into a substrate, and reducing the second into a water molecule, with two electrons provided by NADPH via cytochrome P450 reductase (NADPH--hemoprotein reductase). Catalyzes the hydroxylation of carbon-hydrogen bonds. Exhibits high catalytic activity for the formation of hydroxyestrogens from estrone (E1) and 17beta-estradiol (E2), namely 2-hydroxy E1 and E2. Metabolizes cholesterol toward 25-hydroxycholesterol, a physiological regulator of cellular cholesterol homeostasis. May act as a major enzyme for all-trans retinoic acid biosynthesis in the liver. Catalyzes two successive oxidative transformation of all-trans retinol to all-trans retinal and then to the active form all-trans retinoic acid. Primarily catalyzes stereoselective epoxidation of the last double bond of polyunsaturated fatty acids (PUFA), displaying a strong preference for the (R,S) stereoisomer. Catalyzes bisallylic hydroxylation and omega-1 hydroxylation of PUFA. May also participate in eicosanoids metabolism by converting hydroperoxide species into oxo metabolites (lipoxygenase-like reaction, NADPH-independent). Plays a role in the oxidative metabolism of xenobiotics. Catalyzes the N-hydroxylation of heterocyclic amines and the O-deethylation of phenacetin. Metabolizes caffeine via N3-demethylation.</text>
</comment>
<comment type="catalytic activity">
    <reaction evidence="2">
        <text>an organic molecule + reduced [NADPH--hemoprotein reductase] + O2 = an alcohol + oxidized [NADPH--hemoprotein reductase] + H2O + H(+)</text>
        <dbReference type="Rhea" id="RHEA:17149"/>
        <dbReference type="Rhea" id="RHEA-COMP:11964"/>
        <dbReference type="Rhea" id="RHEA-COMP:11965"/>
        <dbReference type="ChEBI" id="CHEBI:15377"/>
        <dbReference type="ChEBI" id="CHEBI:15378"/>
        <dbReference type="ChEBI" id="CHEBI:15379"/>
        <dbReference type="ChEBI" id="CHEBI:30879"/>
        <dbReference type="ChEBI" id="CHEBI:57618"/>
        <dbReference type="ChEBI" id="CHEBI:58210"/>
        <dbReference type="ChEBI" id="CHEBI:142491"/>
        <dbReference type="EC" id="1.14.14.1"/>
    </reaction>
    <physiologicalReaction direction="left-to-right" evidence="2">
        <dbReference type="Rhea" id="RHEA:17150"/>
    </physiologicalReaction>
</comment>
<comment type="catalytic activity">
    <reaction evidence="2">
        <text>17beta-estradiol + reduced [NADPH--hemoprotein reductase] + O2 = 2-hydroxy-17beta-estradiol + oxidized [NADPH--hemoprotein reductase] + H2O + H(+)</text>
        <dbReference type="Rhea" id="RHEA:47212"/>
        <dbReference type="Rhea" id="RHEA-COMP:11964"/>
        <dbReference type="Rhea" id="RHEA-COMP:11965"/>
        <dbReference type="ChEBI" id="CHEBI:15377"/>
        <dbReference type="ChEBI" id="CHEBI:15378"/>
        <dbReference type="ChEBI" id="CHEBI:15379"/>
        <dbReference type="ChEBI" id="CHEBI:16469"/>
        <dbReference type="ChEBI" id="CHEBI:28744"/>
        <dbReference type="ChEBI" id="CHEBI:57618"/>
        <dbReference type="ChEBI" id="CHEBI:58210"/>
    </reaction>
    <physiologicalReaction direction="left-to-right" evidence="2">
        <dbReference type="Rhea" id="RHEA:47213"/>
    </physiologicalReaction>
</comment>
<comment type="catalytic activity">
    <reaction evidence="2">
        <text>17beta-estradiol + reduced [NADPH--hemoprotein reductase] + O2 = 4-hydroxy-17beta-estradiol + oxidized [NADPH--hemoprotein reductase] + H2O + H(+)</text>
        <dbReference type="Rhea" id="RHEA:47280"/>
        <dbReference type="Rhea" id="RHEA-COMP:11964"/>
        <dbReference type="Rhea" id="RHEA-COMP:11965"/>
        <dbReference type="ChEBI" id="CHEBI:15377"/>
        <dbReference type="ChEBI" id="CHEBI:15378"/>
        <dbReference type="ChEBI" id="CHEBI:15379"/>
        <dbReference type="ChEBI" id="CHEBI:16469"/>
        <dbReference type="ChEBI" id="CHEBI:57618"/>
        <dbReference type="ChEBI" id="CHEBI:58210"/>
        <dbReference type="ChEBI" id="CHEBI:62845"/>
    </reaction>
    <physiologicalReaction direction="left-to-right" evidence="2">
        <dbReference type="Rhea" id="RHEA:47281"/>
    </physiologicalReaction>
</comment>
<comment type="catalytic activity">
    <reaction evidence="2">
        <text>estrone + reduced [NADPH--hemoprotein reductase] + O2 = 2-hydroxyestrone + oxidized [NADPH--hemoprotein reductase] + H2O + H(+)</text>
        <dbReference type="Rhea" id="RHEA:47208"/>
        <dbReference type="Rhea" id="RHEA-COMP:11964"/>
        <dbReference type="Rhea" id="RHEA-COMP:11965"/>
        <dbReference type="ChEBI" id="CHEBI:1156"/>
        <dbReference type="ChEBI" id="CHEBI:15377"/>
        <dbReference type="ChEBI" id="CHEBI:15378"/>
        <dbReference type="ChEBI" id="CHEBI:15379"/>
        <dbReference type="ChEBI" id="CHEBI:17263"/>
        <dbReference type="ChEBI" id="CHEBI:57618"/>
        <dbReference type="ChEBI" id="CHEBI:58210"/>
    </reaction>
    <physiologicalReaction direction="left-to-right" evidence="2">
        <dbReference type="Rhea" id="RHEA:47209"/>
    </physiologicalReaction>
</comment>
<comment type="catalytic activity">
    <reaction evidence="2">
        <text>estrone + reduced [NADPH--hemoprotein reductase] + O2 = 4-hydroxyestrone + oxidized [NADPH--hemoprotein reductase] + H2O + H(+)</text>
        <dbReference type="Rhea" id="RHEA:47292"/>
        <dbReference type="Rhea" id="RHEA-COMP:11964"/>
        <dbReference type="Rhea" id="RHEA-COMP:11965"/>
        <dbReference type="ChEBI" id="CHEBI:15377"/>
        <dbReference type="ChEBI" id="CHEBI:15378"/>
        <dbReference type="ChEBI" id="CHEBI:15379"/>
        <dbReference type="ChEBI" id="CHEBI:17263"/>
        <dbReference type="ChEBI" id="CHEBI:57618"/>
        <dbReference type="ChEBI" id="CHEBI:58210"/>
        <dbReference type="ChEBI" id="CHEBI:87602"/>
    </reaction>
    <physiologicalReaction direction="left-to-right" evidence="2">
        <dbReference type="Rhea" id="RHEA:47293"/>
    </physiologicalReaction>
</comment>
<comment type="catalytic activity">
    <reaction evidence="2">
        <text>cholesterol + reduced [NADPH--hemoprotein reductase] + O2 = 25-hydroxycholesterol + oxidized [NADPH--hemoprotein reductase] + H2O + H(+)</text>
        <dbReference type="Rhea" id="RHEA:50256"/>
        <dbReference type="Rhea" id="RHEA-COMP:11964"/>
        <dbReference type="Rhea" id="RHEA-COMP:11965"/>
        <dbReference type="ChEBI" id="CHEBI:15377"/>
        <dbReference type="ChEBI" id="CHEBI:15378"/>
        <dbReference type="ChEBI" id="CHEBI:15379"/>
        <dbReference type="ChEBI" id="CHEBI:16113"/>
        <dbReference type="ChEBI" id="CHEBI:42977"/>
        <dbReference type="ChEBI" id="CHEBI:57618"/>
        <dbReference type="ChEBI" id="CHEBI:58210"/>
    </reaction>
    <physiologicalReaction direction="left-to-right" evidence="2">
        <dbReference type="Rhea" id="RHEA:50257"/>
    </physiologicalReaction>
</comment>
<comment type="catalytic activity">
    <reaction evidence="2">
        <text>all-trans-retinol + reduced [NADPH--hemoprotein reductase] + O2 = all-trans-retinal + oxidized [NADPH--hemoprotein reductase] + 2 H2O + H(+)</text>
        <dbReference type="Rhea" id="RHEA:42092"/>
        <dbReference type="Rhea" id="RHEA-COMP:11964"/>
        <dbReference type="Rhea" id="RHEA-COMP:11965"/>
        <dbReference type="ChEBI" id="CHEBI:15377"/>
        <dbReference type="ChEBI" id="CHEBI:15378"/>
        <dbReference type="ChEBI" id="CHEBI:15379"/>
        <dbReference type="ChEBI" id="CHEBI:17336"/>
        <dbReference type="ChEBI" id="CHEBI:17898"/>
        <dbReference type="ChEBI" id="CHEBI:57618"/>
        <dbReference type="ChEBI" id="CHEBI:58210"/>
    </reaction>
    <physiologicalReaction direction="left-to-right" evidence="2">
        <dbReference type="Rhea" id="RHEA:42093"/>
    </physiologicalReaction>
</comment>
<comment type="catalytic activity">
    <reaction evidence="2">
        <text>all-trans-retinal + reduced [NADPH--hemoprotein reductase] + O2 = all-trans-retinoate + oxidized [NADPH--hemoprotein reductase] + H2O + 2 H(+)</text>
        <dbReference type="Rhea" id="RHEA:42088"/>
        <dbReference type="Rhea" id="RHEA-COMP:11964"/>
        <dbReference type="Rhea" id="RHEA-COMP:11965"/>
        <dbReference type="ChEBI" id="CHEBI:15377"/>
        <dbReference type="ChEBI" id="CHEBI:15378"/>
        <dbReference type="ChEBI" id="CHEBI:15379"/>
        <dbReference type="ChEBI" id="CHEBI:17898"/>
        <dbReference type="ChEBI" id="CHEBI:35291"/>
        <dbReference type="ChEBI" id="CHEBI:57618"/>
        <dbReference type="ChEBI" id="CHEBI:58210"/>
    </reaction>
    <physiologicalReaction direction="left-to-right" evidence="2">
        <dbReference type="Rhea" id="RHEA:42089"/>
    </physiologicalReaction>
</comment>
<comment type="catalytic activity">
    <reaction evidence="2">
        <text>(5Z,8Z,11Z,14Z)-eicosatetraenoate + reduced [NADPH--hemoprotein reductase] + O2 = (14R,15S)-epoxy-(5Z,8Z,11Z)-eicosatrienoate + oxidized [NADPH--hemoprotein reductase] + H2O + H(+)</text>
        <dbReference type="Rhea" id="RHEA:49860"/>
        <dbReference type="Rhea" id="RHEA-COMP:11964"/>
        <dbReference type="Rhea" id="RHEA-COMP:11965"/>
        <dbReference type="ChEBI" id="CHEBI:15377"/>
        <dbReference type="ChEBI" id="CHEBI:15378"/>
        <dbReference type="ChEBI" id="CHEBI:15379"/>
        <dbReference type="ChEBI" id="CHEBI:32395"/>
        <dbReference type="ChEBI" id="CHEBI:57618"/>
        <dbReference type="ChEBI" id="CHEBI:58210"/>
        <dbReference type="ChEBI" id="CHEBI:131965"/>
    </reaction>
    <physiologicalReaction direction="left-to-right" evidence="2">
        <dbReference type="Rhea" id="RHEA:49861"/>
    </physiologicalReaction>
</comment>
<comment type="catalytic activity">
    <reaction evidence="2">
        <text>(5Z,8Z,11Z,14Z)-eicosatetraenoate + reduced [NADPH--hemoprotein reductase] + O2 = (14S,15R)-epoxy-(5Z,8Z,11Z)-eicosatrienoate + oxidized [NADPH--hemoprotein reductase] + H2O + H(+)</text>
        <dbReference type="Rhea" id="RHEA:49856"/>
        <dbReference type="Rhea" id="RHEA-COMP:11964"/>
        <dbReference type="Rhea" id="RHEA-COMP:11965"/>
        <dbReference type="ChEBI" id="CHEBI:15377"/>
        <dbReference type="ChEBI" id="CHEBI:15378"/>
        <dbReference type="ChEBI" id="CHEBI:15379"/>
        <dbReference type="ChEBI" id="CHEBI:32395"/>
        <dbReference type="ChEBI" id="CHEBI:57618"/>
        <dbReference type="ChEBI" id="CHEBI:58210"/>
        <dbReference type="ChEBI" id="CHEBI:131964"/>
    </reaction>
    <physiologicalReaction direction="left-to-right" evidence="2">
        <dbReference type="Rhea" id="RHEA:49857"/>
    </physiologicalReaction>
</comment>
<comment type="catalytic activity">
    <reaction evidence="2">
        <text>(5Z,8Z,11Z,14Z,17Z)-eicosapentaenoate + reduced [NADPH--hemoprotein reductase] + O2 = (17R,18S)-epoxy-(5Z,8Z,11Z,14Z)-eicosatetraenoate + oxidized [NADPH--hemoprotein reductase] + H2O + H(+)</text>
        <dbReference type="Rhea" id="RHEA:39779"/>
        <dbReference type="Rhea" id="RHEA-COMP:11964"/>
        <dbReference type="Rhea" id="RHEA-COMP:11965"/>
        <dbReference type="ChEBI" id="CHEBI:15377"/>
        <dbReference type="ChEBI" id="CHEBI:15378"/>
        <dbReference type="ChEBI" id="CHEBI:15379"/>
        <dbReference type="ChEBI" id="CHEBI:57618"/>
        <dbReference type="ChEBI" id="CHEBI:58210"/>
        <dbReference type="ChEBI" id="CHEBI:58562"/>
        <dbReference type="ChEBI" id="CHEBI:76634"/>
    </reaction>
    <physiologicalReaction direction="left-to-right" evidence="2">
        <dbReference type="Rhea" id="RHEA:39780"/>
    </physiologicalReaction>
</comment>
<comment type="catalytic activity">
    <reaction evidence="2">
        <text>(4Z,7Z,10Z,13Z,16Z,19Z)-docosahexaenoate + reduced [NADPH--hemoprotein reductase] + O2 = (19R,20S)-epoxy-(4Z,7Z,10Z,13Z,16Z)-docosapentaenoate + oxidized [NADPH--hemoprotein reductase] + H2O + H(+)</text>
        <dbReference type="Rhea" id="RHEA:52120"/>
        <dbReference type="Rhea" id="RHEA-COMP:11964"/>
        <dbReference type="Rhea" id="RHEA-COMP:11965"/>
        <dbReference type="ChEBI" id="CHEBI:15377"/>
        <dbReference type="ChEBI" id="CHEBI:15378"/>
        <dbReference type="ChEBI" id="CHEBI:15379"/>
        <dbReference type="ChEBI" id="CHEBI:57618"/>
        <dbReference type="ChEBI" id="CHEBI:58210"/>
        <dbReference type="ChEBI" id="CHEBI:77016"/>
        <dbReference type="ChEBI" id="CHEBI:136410"/>
    </reaction>
    <physiologicalReaction direction="left-to-right" evidence="2">
        <dbReference type="Rhea" id="RHEA:52121"/>
    </physiologicalReaction>
</comment>
<comment type="catalytic activity">
    <reaction evidence="2">
        <text>(5S)-hydroperoxy-(6E,8Z,11Z,14Z)-eicosatetraenoate = 5-oxo-(6E,8Z,11Z,14Z)-eicosatetraenoate + H2O</text>
        <dbReference type="Rhea" id="RHEA:48632"/>
        <dbReference type="ChEBI" id="CHEBI:15377"/>
        <dbReference type="ChEBI" id="CHEBI:57450"/>
        <dbReference type="ChEBI" id="CHEBI:65342"/>
    </reaction>
    <physiologicalReaction direction="left-to-right" evidence="2">
        <dbReference type="Rhea" id="RHEA:48633"/>
    </physiologicalReaction>
</comment>
<comment type="catalytic activity">
    <reaction evidence="2">
        <text>(12S)-hydroperoxy-(5Z,8Z,10E,14Z)-eicosatetraenoate = 12-oxo-(5Z,8Z,10E,14Z)-eicosatetraenoate + H2O</text>
        <dbReference type="Rhea" id="RHEA:37947"/>
        <dbReference type="ChEBI" id="CHEBI:15377"/>
        <dbReference type="ChEBI" id="CHEBI:57444"/>
        <dbReference type="ChEBI" id="CHEBI:75231"/>
        <dbReference type="EC" id="4.2.1.152"/>
    </reaction>
    <physiologicalReaction direction="left-to-right" evidence="2">
        <dbReference type="Rhea" id="RHEA:37948"/>
    </physiologicalReaction>
</comment>
<comment type="catalytic activity">
    <reaction evidence="2">
        <text>(15S)-hydroperoxy-(5Z,8Z,11Z,13E)-eicosatetraenoate = 15-oxo-(5Z,8Z,11Z,13E)-eicosatetraenoate + H2O</text>
        <dbReference type="Rhea" id="RHEA:48636"/>
        <dbReference type="ChEBI" id="CHEBI:15377"/>
        <dbReference type="ChEBI" id="CHEBI:57410"/>
        <dbReference type="ChEBI" id="CHEBI:57446"/>
    </reaction>
    <physiologicalReaction direction="left-to-right" evidence="2">
        <dbReference type="Rhea" id="RHEA:48637"/>
    </physiologicalReaction>
</comment>
<comment type="catalytic activity">
    <reaction evidence="2">
        <text>(13S)-hydroperoxy-(9Z,11E)-octadecadienoate = 13-oxo-(9Z,11E)-octadecadienoate + H2O</text>
        <dbReference type="Rhea" id="RHEA:48716"/>
        <dbReference type="ChEBI" id="CHEBI:15377"/>
        <dbReference type="ChEBI" id="CHEBI:57466"/>
        <dbReference type="ChEBI" id="CHEBI:90781"/>
    </reaction>
    <physiologicalReaction direction="left-to-right" evidence="2">
        <dbReference type="Rhea" id="RHEA:48717"/>
    </physiologicalReaction>
</comment>
<comment type="catalytic activity">
    <reaction evidence="2">
        <text>(5Z,8Z,11Z,14Z)-eicosatetraenoate + reduced [NADPH--hemoprotein reductase] + O2 = 13-hydroxy-(5Z,8Z,11Z,14Z)-eicosatetraenoate + oxidized [NADPH--hemoprotein reductase] + H2O + H(+)</text>
        <dbReference type="Rhea" id="RHEA:52292"/>
        <dbReference type="Rhea" id="RHEA-COMP:11964"/>
        <dbReference type="Rhea" id="RHEA-COMP:11965"/>
        <dbReference type="ChEBI" id="CHEBI:15377"/>
        <dbReference type="ChEBI" id="CHEBI:15378"/>
        <dbReference type="ChEBI" id="CHEBI:15379"/>
        <dbReference type="ChEBI" id="CHEBI:32395"/>
        <dbReference type="ChEBI" id="CHEBI:57618"/>
        <dbReference type="ChEBI" id="CHEBI:58210"/>
        <dbReference type="ChEBI" id="CHEBI:136524"/>
    </reaction>
    <physiologicalReaction direction="left-to-right" evidence="2">
        <dbReference type="Rhea" id="RHEA:52293"/>
    </physiologicalReaction>
</comment>
<comment type="catalytic activity">
    <reaction evidence="2">
        <text>(5Z,8Z,11Z,14Z)-eicosatetraenoate + reduced [NADPH--hemoprotein reductase] + O2 = 19-hydroxy-(5Z,8Z,11Z,14Z)-eicosatetraenoate + oxidized [NADPH--hemoprotein reductase] + H2O + H(+)</text>
        <dbReference type="Rhea" id="RHEA:39759"/>
        <dbReference type="Rhea" id="RHEA-COMP:11964"/>
        <dbReference type="Rhea" id="RHEA-COMP:11965"/>
        <dbReference type="ChEBI" id="CHEBI:15377"/>
        <dbReference type="ChEBI" id="CHEBI:15378"/>
        <dbReference type="ChEBI" id="CHEBI:15379"/>
        <dbReference type="ChEBI" id="CHEBI:32395"/>
        <dbReference type="ChEBI" id="CHEBI:57618"/>
        <dbReference type="ChEBI" id="CHEBI:58210"/>
        <dbReference type="ChEBI" id="CHEBI:76627"/>
    </reaction>
    <physiologicalReaction direction="left-to-right" evidence="2">
        <dbReference type="Rhea" id="RHEA:39760"/>
    </physiologicalReaction>
</comment>
<comment type="catalytic activity">
    <reaction evidence="2">
        <text>(9Z,12Z)-octadecadienoate + reduced [NADPH--hemoprotein reductase] + O2 = 11-hydroxy-(9Z,12Z)-octadecadienoate + oxidized [NADPH--hemoprotein reductase] + H2O + H(+)</text>
        <dbReference type="Rhea" id="RHEA:52284"/>
        <dbReference type="Rhea" id="RHEA-COMP:11964"/>
        <dbReference type="Rhea" id="RHEA-COMP:11965"/>
        <dbReference type="ChEBI" id="CHEBI:15377"/>
        <dbReference type="ChEBI" id="CHEBI:15378"/>
        <dbReference type="ChEBI" id="CHEBI:15379"/>
        <dbReference type="ChEBI" id="CHEBI:30245"/>
        <dbReference type="ChEBI" id="CHEBI:57618"/>
        <dbReference type="ChEBI" id="CHEBI:58210"/>
        <dbReference type="ChEBI" id="CHEBI:136522"/>
    </reaction>
    <physiologicalReaction direction="left-to-right" evidence="2">
        <dbReference type="Rhea" id="RHEA:52285"/>
    </physiologicalReaction>
</comment>
<comment type="cofactor">
    <cofactor evidence="1">
        <name>heme</name>
        <dbReference type="ChEBI" id="CHEBI:30413"/>
    </cofactor>
</comment>
<comment type="pathway">
    <text evidence="2">Cofactor metabolism; retinol metabolism.</text>
</comment>
<comment type="pathway">
    <text evidence="2">Steroid metabolism; cholesterol metabolism.</text>
</comment>
<comment type="pathway">
    <text evidence="2">Lipid metabolism; arachidonate metabolism.</text>
</comment>
<comment type="subunit">
    <text evidence="2">Interacts with PGRMC1; the interaction requires PGRMC1 homodimerization.</text>
</comment>
<comment type="subcellular location">
    <subcellularLocation>
        <location evidence="2">Endoplasmic reticulum membrane</location>
        <topology evidence="2">Peripheral membrane protein</topology>
    </subcellularLocation>
    <subcellularLocation>
        <location evidence="2">Microsome membrane</location>
        <topology evidence="2">Peripheral membrane protein</topology>
    </subcellularLocation>
</comment>
<comment type="tissue specificity">
    <text>Found in lung and liver.</text>
</comment>
<comment type="induction">
    <text>By 3-methylcholanthrene (3MC).</text>
</comment>
<comment type="similarity">
    <text evidence="4">Belongs to the cytochrome P450 family.</text>
</comment>
<reference key="1">
    <citation type="journal article" date="1990" name="Arch. Biochem. Biophys.">
        <title>Cloning and characterization of two major 3-methylcholanthrene inducible hamster liver cytochrome P450s.</title>
        <authorList>
            <person name="Lai T.S."/>
            <person name="Chiang J.Y.L."/>
        </authorList>
    </citation>
    <scope>NUCLEOTIDE SEQUENCE [MRNA]</scope>
    <source>
        <tissue>Liver</tissue>
    </source>
</reference>
<reference key="2">
    <citation type="journal article" date="1991" name="J. Biochem.">
        <title>Hamster cytochrome P-450 IA gene family, P-450IA1 and P-450IA2 in lung and liver: cDNA cloning and sequence analysis.</title>
        <authorList>
            <person name="Sagami I."/>
            <person name="Ohmachi T."/>
            <person name="Fujii H."/>
            <person name="Kikuchi H."/>
            <person name="Watanabe M."/>
        </authorList>
    </citation>
    <scope>NUCLEOTIDE SEQUENCE [MRNA]</scope>
</reference>
<reference key="3">
    <citation type="journal article" date="1990" name="J. Biochem.">
        <title>Purification and characterization of two forms of 2,3,4,7,8-pentachlorodibenzofuran-inducible cytochrome P-450 in hamster liver.</title>
        <authorList>
            <person name="Koga N."/>
            <person name="Ariyoshi N."/>
            <person name="Nakashima H."/>
            <person name="Yoshimura H."/>
        </authorList>
    </citation>
    <scope>PROTEIN SEQUENCE OF 2-19</scope>
    <source>
        <tissue>Liver</tissue>
    </source>
</reference>
<accession>P24453</accession>
<organism>
    <name type="scientific">Mesocricetus auratus</name>
    <name type="common">Golden hamster</name>
    <dbReference type="NCBI Taxonomy" id="10036"/>
    <lineage>
        <taxon>Eukaryota</taxon>
        <taxon>Metazoa</taxon>
        <taxon>Chordata</taxon>
        <taxon>Craniata</taxon>
        <taxon>Vertebrata</taxon>
        <taxon>Euteleostomi</taxon>
        <taxon>Mammalia</taxon>
        <taxon>Eutheria</taxon>
        <taxon>Euarchontoglires</taxon>
        <taxon>Glires</taxon>
        <taxon>Rodentia</taxon>
        <taxon>Myomorpha</taxon>
        <taxon>Muroidea</taxon>
        <taxon>Cricetidae</taxon>
        <taxon>Cricetinae</taxon>
        <taxon>Mesocricetus</taxon>
    </lineage>
</organism>
<evidence type="ECO:0000250" key="1"/>
<evidence type="ECO:0000250" key="2">
    <source>
        <dbReference type="UniProtKB" id="P05177"/>
    </source>
</evidence>
<evidence type="ECO:0000269" key="3">
    <source>
    </source>
</evidence>
<evidence type="ECO:0000305" key="4"/>